<keyword id="KW-1185">Reference proteome</keyword>
<keyword id="KW-0687">Ribonucleoprotein</keyword>
<keyword id="KW-0689">Ribosomal protein</keyword>
<protein>
    <recommendedName>
        <fullName evidence="1">Small ribosomal subunit protein uS10</fullName>
    </recommendedName>
    <alternativeName>
        <fullName evidence="2">30S ribosomal protein S10</fullName>
    </alternativeName>
</protein>
<feature type="chain" id="PRO_1000127158" description="Small ribosomal subunit protein uS10">
    <location>
        <begin position="1"/>
        <end position="105"/>
    </location>
</feature>
<sequence>MATLQQQKIRIRLQAFDRRLLDTSCEKIVDTANRTNATAIGPIPLPTKRRIYCVLRSPHVDKDSREHFETRTHRRIIDIYQPSSKTIDALMKLDLPSGVDIEVKL</sequence>
<name>RS10_NOSP7</name>
<comment type="function">
    <text evidence="1">Involved in the binding of tRNA to the ribosomes.</text>
</comment>
<comment type="subunit">
    <text evidence="1">Part of the 30S ribosomal subunit.</text>
</comment>
<comment type="similarity">
    <text evidence="1">Belongs to the universal ribosomal protein uS10 family.</text>
</comment>
<reference key="1">
    <citation type="journal article" date="2013" name="Plant Physiol.">
        <title>A Nostoc punctiforme Sugar Transporter Necessary to Establish a Cyanobacterium-Plant Symbiosis.</title>
        <authorList>
            <person name="Ekman M."/>
            <person name="Picossi S."/>
            <person name="Campbell E.L."/>
            <person name="Meeks J.C."/>
            <person name="Flores E."/>
        </authorList>
    </citation>
    <scope>NUCLEOTIDE SEQUENCE [LARGE SCALE GENOMIC DNA]</scope>
    <source>
        <strain>ATCC 29133 / PCC 73102</strain>
    </source>
</reference>
<evidence type="ECO:0000255" key="1">
    <source>
        <dbReference type="HAMAP-Rule" id="MF_00508"/>
    </source>
</evidence>
<evidence type="ECO:0000305" key="2"/>
<gene>
    <name evidence="1" type="primary">rpsJ</name>
    <name evidence="1" type="synonym">rps10</name>
    <name type="ordered locus">Npun_F3885</name>
</gene>
<dbReference type="EMBL" id="CP001037">
    <property type="protein sequence ID" value="ACC82269.1"/>
    <property type="molecule type" value="Genomic_DNA"/>
</dbReference>
<dbReference type="RefSeq" id="WP_008232935.1">
    <property type="nucleotide sequence ID" value="NC_010628.1"/>
</dbReference>
<dbReference type="SMR" id="B2J5B2"/>
<dbReference type="STRING" id="63737.Npun_F3885"/>
<dbReference type="EnsemblBacteria" id="ACC82269">
    <property type="protein sequence ID" value="ACC82269"/>
    <property type="gene ID" value="Npun_F3885"/>
</dbReference>
<dbReference type="GeneID" id="57091798"/>
<dbReference type="KEGG" id="npu:Npun_F3885"/>
<dbReference type="eggNOG" id="COG0051">
    <property type="taxonomic scope" value="Bacteria"/>
</dbReference>
<dbReference type="HOGENOM" id="CLU_122625_1_3_3"/>
<dbReference type="OrthoDB" id="9804464at2"/>
<dbReference type="PhylomeDB" id="B2J5B2"/>
<dbReference type="Proteomes" id="UP000001191">
    <property type="component" value="Chromosome"/>
</dbReference>
<dbReference type="GO" id="GO:1990904">
    <property type="term" value="C:ribonucleoprotein complex"/>
    <property type="evidence" value="ECO:0007669"/>
    <property type="project" value="UniProtKB-KW"/>
</dbReference>
<dbReference type="GO" id="GO:0005840">
    <property type="term" value="C:ribosome"/>
    <property type="evidence" value="ECO:0007669"/>
    <property type="project" value="UniProtKB-KW"/>
</dbReference>
<dbReference type="GO" id="GO:0003735">
    <property type="term" value="F:structural constituent of ribosome"/>
    <property type="evidence" value="ECO:0007669"/>
    <property type="project" value="InterPro"/>
</dbReference>
<dbReference type="GO" id="GO:0000049">
    <property type="term" value="F:tRNA binding"/>
    <property type="evidence" value="ECO:0007669"/>
    <property type="project" value="UniProtKB-UniRule"/>
</dbReference>
<dbReference type="GO" id="GO:0006412">
    <property type="term" value="P:translation"/>
    <property type="evidence" value="ECO:0007669"/>
    <property type="project" value="UniProtKB-UniRule"/>
</dbReference>
<dbReference type="FunFam" id="3.30.70.600:FF:000001">
    <property type="entry name" value="30S ribosomal protein S10"/>
    <property type="match status" value="1"/>
</dbReference>
<dbReference type="Gene3D" id="3.30.70.600">
    <property type="entry name" value="Ribosomal protein S10 domain"/>
    <property type="match status" value="1"/>
</dbReference>
<dbReference type="HAMAP" id="MF_00508">
    <property type="entry name" value="Ribosomal_uS10"/>
    <property type="match status" value="1"/>
</dbReference>
<dbReference type="InterPro" id="IPR001848">
    <property type="entry name" value="Ribosomal_uS10"/>
</dbReference>
<dbReference type="InterPro" id="IPR018268">
    <property type="entry name" value="Ribosomal_uS10_CS"/>
</dbReference>
<dbReference type="InterPro" id="IPR027486">
    <property type="entry name" value="Ribosomal_uS10_dom"/>
</dbReference>
<dbReference type="InterPro" id="IPR036838">
    <property type="entry name" value="Ribosomal_uS10_dom_sf"/>
</dbReference>
<dbReference type="NCBIfam" id="NF001861">
    <property type="entry name" value="PRK00596.1"/>
    <property type="match status" value="1"/>
</dbReference>
<dbReference type="NCBIfam" id="TIGR01049">
    <property type="entry name" value="rpsJ_bact"/>
    <property type="match status" value="1"/>
</dbReference>
<dbReference type="PANTHER" id="PTHR11700">
    <property type="entry name" value="30S RIBOSOMAL PROTEIN S10 FAMILY MEMBER"/>
    <property type="match status" value="1"/>
</dbReference>
<dbReference type="Pfam" id="PF00338">
    <property type="entry name" value="Ribosomal_S10"/>
    <property type="match status" value="1"/>
</dbReference>
<dbReference type="PRINTS" id="PR00971">
    <property type="entry name" value="RIBOSOMALS10"/>
</dbReference>
<dbReference type="SMART" id="SM01403">
    <property type="entry name" value="Ribosomal_S10"/>
    <property type="match status" value="1"/>
</dbReference>
<dbReference type="SUPFAM" id="SSF54999">
    <property type="entry name" value="Ribosomal protein S10"/>
    <property type="match status" value="1"/>
</dbReference>
<dbReference type="PROSITE" id="PS00361">
    <property type="entry name" value="RIBOSOMAL_S10"/>
    <property type="match status" value="1"/>
</dbReference>
<proteinExistence type="inferred from homology"/>
<organism>
    <name type="scientific">Nostoc punctiforme (strain ATCC 29133 / PCC 73102)</name>
    <dbReference type="NCBI Taxonomy" id="63737"/>
    <lineage>
        <taxon>Bacteria</taxon>
        <taxon>Bacillati</taxon>
        <taxon>Cyanobacteriota</taxon>
        <taxon>Cyanophyceae</taxon>
        <taxon>Nostocales</taxon>
        <taxon>Nostocaceae</taxon>
        <taxon>Nostoc</taxon>
    </lineage>
</organism>
<accession>B2J5B2</accession>